<organism>
    <name type="scientific">Scheffersomyces stipitis (strain ATCC 58785 / CBS 6054 / NBRC 10063 / NRRL Y-11545)</name>
    <name type="common">Yeast</name>
    <name type="synonym">Pichia stipitis</name>
    <dbReference type="NCBI Taxonomy" id="322104"/>
    <lineage>
        <taxon>Eukaryota</taxon>
        <taxon>Fungi</taxon>
        <taxon>Dikarya</taxon>
        <taxon>Ascomycota</taxon>
        <taxon>Saccharomycotina</taxon>
        <taxon>Pichiomycetes</taxon>
        <taxon>Debaryomycetaceae</taxon>
        <taxon>Scheffersomyces</taxon>
    </lineage>
</organism>
<reference key="1">
    <citation type="journal article" date="2007" name="Nat. Biotechnol.">
        <title>Genome sequence of the lignocellulose-bioconverting and xylose-fermenting yeast Pichia stipitis.</title>
        <authorList>
            <person name="Jeffries T.W."/>
            <person name="Grigoriev I.V."/>
            <person name="Grimwood J."/>
            <person name="Laplaza J.M."/>
            <person name="Aerts A."/>
            <person name="Salamov A."/>
            <person name="Schmutz J."/>
            <person name="Lindquist E."/>
            <person name="Dehal P."/>
            <person name="Shapiro H."/>
            <person name="Jin Y.-S."/>
            <person name="Passoth V."/>
            <person name="Richardson P.M."/>
        </authorList>
    </citation>
    <scope>NUCLEOTIDE SEQUENCE [LARGE SCALE GENOMIC DNA]</scope>
    <source>
        <strain>ATCC 58785 / CBS 6054 / NBRC 10063 / NRRL Y-11545</strain>
    </source>
</reference>
<feature type="chain" id="PRO_0000384194" description="Mitochondrial distribution and morphology protein 10">
    <location>
        <begin position="1"/>
        <end position="469"/>
    </location>
</feature>
<proteinExistence type="inferred from homology"/>
<keyword id="KW-0472">Membrane</keyword>
<keyword id="KW-0496">Mitochondrion</keyword>
<keyword id="KW-1000">Mitochondrion outer membrane</keyword>
<keyword id="KW-1185">Reference proteome</keyword>
<keyword id="KW-0812">Transmembrane</keyword>
<keyword id="KW-1134">Transmembrane beta strand</keyword>
<accession>A3LT10</accession>
<protein>
    <recommendedName>
        <fullName evidence="1">Mitochondrial distribution and morphology protein 10</fullName>
    </recommendedName>
    <alternativeName>
        <fullName evidence="1">Mitochondrial inheritance component MDM10</fullName>
    </alternativeName>
</protein>
<gene>
    <name evidence="1" type="primary">MDM10</name>
    <name type="ORF">PICST_45177</name>
</gene>
<sequence>MYTYMEYLQKCFYKSTNWNEDNIFSNITASSSAILDFPIPTGFKLDSSNKSTEYSASSFTLSNYHSINGSLAYLYSSVPLRNTMGTKEISLQDALVGFRIIEPSSNNHKQLSSSKRHDRSSLLYGRMYFPGSALEAMIIKRISAHTQLLIKCINNPHMDKNGTMIVYLQKNAPKYSREFIYSTNESLIGFRCLYNLGNSDNSLNTALIPKFDNSVISIGTELWYAARTMSPGLSTAFRYSTRSTSTGKPLTMTLAVNPILGHLSSTYTVKTSVASTFSSRYDFNFFSYASNLSLGFELYNYSRENPVHSFANRSVNLSSEENRFLSHQDRKVRGQHGGNTIPIRSHTSIAQKDHSNMIINPIQNLDNYYHINPTLLPEKKKLLDEVELAAHLSSENSESVTTAFQNLVNESDFASVVKFSTSLNDRMVKILWEGRVKDFLVSTGVKVGMNPVTNAPEFNRFGVSFSYAC</sequence>
<dbReference type="EMBL" id="CP000498">
    <property type="protein sequence ID" value="ABN65986.2"/>
    <property type="molecule type" value="Genomic_DNA"/>
</dbReference>
<dbReference type="RefSeq" id="XP_001384015.2">
    <property type="nucleotide sequence ID" value="XM_001383978.1"/>
</dbReference>
<dbReference type="SMR" id="A3LT10"/>
<dbReference type="FunCoup" id="A3LT10">
    <property type="interactions" value="78"/>
</dbReference>
<dbReference type="STRING" id="322104.A3LT10"/>
<dbReference type="GeneID" id="4838588"/>
<dbReference type="KEGG" id="pic:PICST_45177"/>
<dbReference type="eggNOG" id="ENOG502QUN5">
    <property type="taxonomic scope" value="Eukaryota"/>
</dbReference>
<dbReference type="HOGENOM" id="CLU_026505_0_0_1"/>
<dbReference type="InParanoid" id="A3LT10"/>
<dbReference type="OMA" id="VPGYRQI"/>
<dbReference type="OrthoDB" id="2103793at2759"/>
<dbReference type="Proteomes" id="UP000002258">
    <property type="component" value="Chromosome 4"/>
</dbReference>
<dbReference type="GO" id="GO:0032865">
    <property type="term" value="C:ERMES complex"/>
    <property type="evidence" value="ECO:0007669"/>
    <property type="project" value="UniProtKB-UniRule"/>
</dbReference>
<dbReference type="GO" id="GO:0001401">
    <property type="term" value="C:SAM complex"/>
    <property type="evidence" value="ECO:0007669"/>
    <property type="project" value="TreeGrafter"/>
</dbReference>
<dbReference type="GO" id="GO:0051654">
    <property type="term" value="P:establishment of mitochondrion localization"/>
    <property type="evidence" value="ECO:0007669"/>
    <property type="project" value="TreeGrafter"/>
</dbReference>
<dbReference type="GO" id="GO:0000002">
    <property type="term" value="P:mitochondrial genome maintenance"/>
    <property type="evidence" value="ECO:0007669"/>
    <property type="project" value="UniProtKB-UniRule"/>
</dbReference>
<dbReference type="GO" id="GO:0070096">
    <property type="term" value="P:mitochondrial outer membrane translocase complex assembly"/>
    <property type="evidence" value="ECO:0007669"/>
    <property type="project" value="UniProtKB-UniRule"/>
</dbReference>
<dbReference type="GO" id="GO:1990456">
    <property type="term" value="P:mitochondrion-endoplasmic reticulum membrane tethering"/>
    <property type="evidence" value="ECO:0007669"/>
    <property type="project" value="UniProtKB-UniRule"/>
</dbReference>
<dbReference type="GO" id="GO:0015914">
    <property type="term" value="P:phospholipid transport"/>
    <property type="evidence" value="ECO:0007669"/>
    <property type="project" value="TreeGrafter"/>
</dbReference>
<dbReference type="GO" id="GO:0045040">
    <property type="term" value="P:protein insertion into mitochondrial outer membrane"/>
    <property type="evidence" value="ECO:0007669"/>
    <property type="project" value="UniProtKB-UniRule"/>
</dbReference>
<dbReference type="HAMAP" id="MF_03102">
    <property type="entry name" value="Mdm10"/>
    <property type="match status" value="1"/>
</dbReference>
<dbReference type="InterPro" id="IPR027539">
    <property type="entry name" value="Mdm10"/>
</dbReference>
<dbReference type="PANTHER" id="PTHR28035">
    <property type="entry name" value="MITOCHONDRIAL DISTRIBUTION AND MORPHOLOGY PROTEIN 10"/>
    <property type="match status" value="1"/>
</dbReference>
<dbReference type="PANTHER" id="PTHR28035:SF1">
    <property type="entry name" value="MITOCHONDRIAL DISTRIBUTION AND MORPHOLOGY PROTEIN 10"/>
    <property type="match status" value="1"/>
</dbReference>
<dbReference type="Pfam" id="PF12519">
    <property type="entry name" value="MDM10"/>
    <property type="match status" value="1"/>
</dbReference>
<name>MDM10_PICST</name>
<evidence type="ECO:0000255" key="1">
    <source>
        <dbReference type="HAMAP-Rule" id="MF_03102"/>
    </source>
</evidence>
<comment type="function">
    <text evidence="1">Component of the ERMES/MDM complex, which serves as a molecular tether to connect the endoplasmic reticulum and mitochondria. Components of this complex are involved in the control of mitochondrial shape and protein biogenesis and may function in phospholipid exchange. MDM10 is involved in the late assembly steps of the general translocase of the mitochondrial outer membrane (TOM complex). Functions in the TOM40-specific route of the assembly of outer membrane beta-barrel proteins, including the association of TOM40 with the receptor TOM22 and small TOM proteins. Can associate with the SAM(core) complex as well as the MDM12-MMM1 complex, both involved in late steps of the major beta-barrel assembly pathway, that is responsible for biogenesis of all outer membrane beta-barrel proteins. May act as a switch that shuttles between both complexes and channels precursor proteins into the TOM40-specific pathway. Plays a role in mitochondrial morphology and in the inheritance of mitochondria.</text>
</comment>
<comment type="subunit">
    <text evidence="1">Component of the ER-mitochondria encounter structure (ERMES) or MDM complex, composed of MMM1, MDM10, MDM12 and MDM34. Associates with the mitochondrial outer membrane sorting assembly machinery SAM(core) complex.</text>
</comment>
<comment type="subcellular location">
    <subcellularLocation>
        <location evidence="1">Mitochondrion outer membrane</location>
        <topology evidence="1">Multi-pass membrane protein</topology>
    </subcellularLocation>
    <text evidence="1">The ERMES/MDM complex localizes to a few discrete foci (around 10 per single cell), that represent mitochondria-endoplasmic reticulum junctions. These foci are often found next to mtDNA nucleoids.</text>
</comment>
<comment type="domain">
    <text>Lacks alpha-helical transmembrane segments, suggesting that it resides in the membrane via beta-sheet conformations similar to those predicted for other outer membrane proteins and porin.</text>
</comment>
<comment type="similarity">
    <text evidence="1">Belongs to the MDM10 family.</text>
</comment>